<proteinExistence type="inferred from homology"/>
<name>Y2548_CLOP1</name>
<dbReference type="EMBL" id="CP000246">
    <property type="protein sequence ID" value="ABG82884.1"/>
    <property type="molecule type" value="Genomic_DNA"/>
</dbReference>
<dbReference type="RefSeq" id="WP_003454468.1">
    <property type="nucleotide sequence ID" value="NC_008261.1"/>
</dbReference>
<dbReference type="STRING" id="195103.CPF_2548"/>
<dbReference type="PaxDb" id="195103-CPF_2548"/>
<dbReference type="KEGG" id="cpf:CPF_2548"/>
<dbReference type="eggNOG" id="COG1671">
    <property type="taxonomic scope" value="Bacteria"/>
</dbReference>
<dbReference type="HOGENOM" id="CLU_106619_0_0_9"/>
<dbReference type="Proteomes" id="UP000001823">
    <property type="component" value="Chromosome"/>
</dbReference>
<dbReference type="HAMAP" id="MF_00489">
    <property type="entry name" value="UPF0178"/>
    <property type="match status" value="1"/>
</dbReference>
<dbReference type="InterPro" id="IPR003791">
    <property type="entry name" value="UPF0178"/>
</dbReference>
<dbReference type="NCBIfam" id="NF001095">
    <property type="entry name" value="PRK00124.1"/>
    <property type="match status" value="1"/>
</dbReference>
<dbReference type="PANTHER" id="PTHR35146">
    <property type="entry name" value="UPF0178 PROTEIN YAII"/>
    <property type="match status" value="1"/>
</dbReference>
<dbReference type="PANTHER" id="PTHR35146:SF1">
    <property type="entry name" value="UPF0178 PROTEIN YAII"/>
    <property type="match status" value="1"/>
</dbReference>
<dbReference type="Pfam" id="PF02639">
    <property type="entry name" value="DUF188"/>
    <property type="match status" value="1"/>
</dbReference>
<accession>Q0TN52</accession>
<evidence type="ECO:0000255" key="1">
    <source>
        <dbReference type="HAMAP-Rule" id="MF_00489"/>
    </source>
</evidence>
<organism>
    <name type="scientific">Clostridium perfringens (strain ATCC 13124 / DSM 756 / JCM 1290 / NCIMB 6125 / NCTC 8237 / Type A)</name>
    <dbReference type="NCBI Taxonomy" id="195103"/>
    <lineage>
        <taxon>Bacteria</taxon>
        <taxon>Bacillati</taxon>
        <taxon>Bacillota</taxon>
        <taxon>Clostridia</taxon>
        <taxon>Eubacteriales</taxon>
        <taxon>Clostridiaceae</taxon>
        <taxon>Clostridium</taxon>
    </lineage>
</organism>
<reference key="1">
    <citation type="journal article" date="2006" name="Genome Res.">
        <title>Skewed genomic variability in strains of the toxigenic bacterial pathogen, Clostridium perfringens.</title>
        <authorList>
            <person name="Myers G.S.A."/>
            <person name="Rasko D.A."/>
            <person name="Cheung J.K."/>
            <person name="Ravel J."/>
            <person name="Seshadri R."/>
            <person name="DeBoy R.T."/>
            <person name="Ren Q."/>
            <person name="Varga J."/>
            <person name="Awad M.M."/>
            <person name="Brinkac L.M."/>
            <person name="Daugherty S.C."/>
            <person name="Haft D.H."/>
            <person name="Dodson R.J."/>
            <person name="Madupu R."/>
            <person name="Nelson W.C."/>
            <person name="Rosovitz M.J."/>
            <person name="Sullivan S.A."/>
            <person name="Khouri H."/>
            <person name="Dimitrov G.I."/>
            <person name="Watkins K.L."/>
            <person name="Mulligan S."/>
            <person name="Benton J."/>
            <person name="Radune D."/>
            <person name="Fisher D.J."/>
            <person name="Atkins H.S."/>
            <person name="Hiscox T."/>
            <person name="Jost B.H."/>
            <person name="Billington S.J."/>
            <person name="Songer J.G."/>
            <person name="McClane B.A."/>
            <person name="Titball R.W."/>
            <person name="Rood J.I."/>
            <person name="Melville S.B."/>
            <person name="Paulsen I.T."/>
        </authorList>
    </citation>
    <scope>NUCLEOTIDE SEQUENCE [LARGE SCALE GENOMIC DNA]</scope>
    <source>
        <strain>ATCC 13124 / DSM 756 / JCM 1290 / NCIMB 6125 / NCTC 8237 / S 107 / Type A</strain>
    </source>
</reference>
<sequence>MKIIIDGDGCAGRDIIEEVGKKHSVKILIYCTINHMINSDYSEVRMVDGGFQSVDMYVANNTEENDIVITQDYGVAAMALGKGALAISPRGYIYDNDNIDRLLFERHLSQKNRRAGGKSKGNHKRNKEDDDRLYYNLEVLIEKVKAILN</sequence>
<protein>
    <recommendedName>
        <fullName evidence="1">UPF0178 protein CPF_2548</fullName>
    </recommendedName>
</protein>
<gene>
    <name type="ordered locus">CPF_2548</name>
</gene>
<feature type="chain" id="PRO_1000014417" description="UPF0178 protein CPF_2548">
    <location>
        <begin position="1"/>
        <end position="149"/>
    </location>
</feature>
<comment type="similarity">
    <text evidence="1">Belongs to the UPF0178 family.</text>
</comment>